<reference key="1">
    <citation type="journal article" date="2003" name="Nat. Genet.">
        <title>Comparative analysis of the genome sequences of Bordetella pertussis, Bordetella parapertussis and Bordetella bronchiseptica.</title>
        <authorList>
            <person name="Parkhill J."/>
            <person name="Sebaihia M."/>
            <person name="Preston A."/>
            <person name="Murphy L.D."/>
            <person name="Thomson N.R."/>
            <person name="Harris D.E."/>
            <person name="Holden M.T.G."/>
            <person name="Churcher C.M."/>
            <person name="Bentley S.D."/>
            <person name="Mungall K.L."/>
            <person name="Cerdeno-Tarraga A.-M."/>
            <person name="Temple L."/>
            <person name="James K.D."/>
            <person name="Harris B."/>
            <person name="Quail M.A."/>
            <person name="Achtman M."/>
            <person name="Atkin R."/>
            <person name="Baker S."/>
            <person name="Basham D."/>
            <person name="Bason N."/>
            <person name="Cherevach I."/>
            <person name="Chillingworth T."/>
            <person name="Collins M."/>
            <person name="Cronin A."/>
            <person name="Davis P."/>
            <person name="Doggett J."/>
            <person name="Feltwell T."/>
            <person name="Goble A."/>
            <person name="Hamlin N."/>
            <person name="Hauser H."/>
            <person name="Holroyd S."/>
            <person name="Jagels K."/>
            <person name="Leather S."/>
            <person name="Moule S."/>
            <person name="Norberczak H."/>
            <person name="O'Neil S."/>
            <person name="Ormond D."/>
            <person name="Price C."/>
            <person name="Rabbinowitsch E."/>
            <person name="Rutter S."/>
            <person name="Sanders M."/>
            <person name="Saunders D."/>
            <person name="Seeger K."/>
            <person name="Sharp S."/>
            <person name="Simmonds M."/>
            <person name="Skelton J."/>
            <person name="Squares R."/>
            <person name="Squares S."/>
            <person name="Stevens K."/>
            <person name="Unwin L."/>
            <person name="Whitehead S."/>
            <person name="Barrell B.G."/>
            <person name="Maskell D.J."/>
        </authorList>
    </citation>
    <scope>NUCLEOTIDE SEQUENCE [LARGE SCALE GENOMIC DNA]</scope>
    <source>
        <strain>Tohama I / ATCC BAA-589 / NCTC 13251</strain>
    </source>
</reference>
<organism>
    <name type="scientific">Bordetella pertussis (strain Tohama I / ATCC BAA-589 / NCTC 13251)</name>
    <dbReference type="NCBI Taxonomy" id="257313"/>
    <lineage>
        <taxon>Bacteria</taxon>
        <taxon>Pseudomonadati</taxon>
        <taxon>Pseudomonadota</taxon>
        <taxon>Betaproteobacteria</taxon>
        <taxon>Burkholderiales</taxon>
        <taxon>Alcaligenaceae</taxon>
        <taxon>Bordetella</taxon>
    </lineage>
</organism>
<sequence>MMKGQLAGLMRQAQQMQENMKKAQDALAEIQVEGAAGGGLVKVTMTCRHDVKRVAIDASLLGEDKDMLEDLVAAAFNDALRKAEATSQEKMASVTAGMPLPPGMKLPF</sequence>
<gene>
    <name type="ordered locus">BP1550</name>
</gene>
<keyword id="KW-0963">Cytoplasm</keyword>
<keyword id="KW-0238">DNA-binding</keyword>
<keyword id="KW-1185">Reference proteome</keyword>
<name>Y1550_BORPE</name>
<comment type="function">
    <text evidence="1">Binds to DNA and alters its conformation. May be involved in regulation of gene expression, nucleoid organization and DNA protection.</text>
</comment>
<comment type="subunit">
    <text evidence="1">Homodimer.</text>
</comment>
<comment type="subcellular location">
    <subcellularLocation>
        <location evidence="1">Cytoplasm</location>
        <location evidence="1">Nucleoid</location>
    </subcellularLocation>
</comment>
<comment type="similarity">
    <text evidence="1">Belongs to the YbaB/EbfC family.</text>
</comment>
<dbReference type="EMBL" id="BX640415">
    <property type="protein sequence ID" value="CAE41840.1"/>
    <property type="molecule type" value="Genomic_DNA"/>
</dbReference>
<dbReference type="RefSeq" id="NP_880286.1">
    <property type="nucleotide sequence ID" value="NC_002929.2"/>
</dbReference>
<dbReference type="RefSeq" id="WP_010930423.1">
    <property type="nucleotide sequence ID" value="NZ_CP039022.1"/>
</dbReference>
<dbReference type="SMR" id="Q7VY13"/>
<dbReference type="STRING" id="257313.BP1550"/>
<dbReference type="PaxDb" id="257313-BP1550"/>
<dbReference type="KEGG" id="bpe:BP1550"/>
<dbReference type="PATRIC" id="fig|257313.5.peg.1663"/>
<dbReference type="eggNOG" id="COG0718">
    <property type="taxonomic scope" value="Bacteria"/>
</dbReference>
<dbReference type="HOGENOM" id="CLU_140930_0_0_4"/>
<dbReference type="Proteomes" id="UP000002676">
    <property type="component" value="Chromosome"/>
</dbReference>
<dbReference type="GO" id="GO:0043590">
    <property type="term" value="C:bacterial nucleoid"/>
    <property type="evidence" value="ECO:0007669"/>
    <property type="project" value="UniProtKB-UniRule"/>
</dbReference>
<dbReference type="GO" id="GO:0005829">
    <property type="term" value="C:cytosol"/>
    <property type="evidence" value="ECO:0007669"/>
    <property type="project" value="TreeGrafter"/>
</dbReference>
<dbReference type="GO" id="GO:0003677">
    <property type="term" value="F:DNA binding"/>
    <property type="evidence" value="ECO:0007669"/>
    <property type="project" value="UniProtKB-UniRule"/>
</dbReference>
<dbReference type="Gene3D" id="3.30.1310.10">
    <property type="entry name" value="Nucleoid-associated protein YbaB-like domain"/>
    <property type="match status" value="1"/>
</dbReference>
<dbReference type="HAMAP" id="MF_00274">
    <property type="entry name" value="DNA_YbaB_EbfC"/>
    <property type="match status" value="1"/>
</dbReference>
<dbReference type="InterPro" id="IPR036894">
    <property type="entry name" value="YbaB-like_sf"/>
</dbReference>
<dbReference type="InterPro" id="IPR004401">
    <property type="entry name" value="YbaB/EbfC"/>
</dbReference>
<dbReference type="NCBIfam" id="TIGR00103">
    <property type="entry name" value="DNA_YbaB_EbfC"/>
    <property type="match status" value="1"/>
</dbReference>
<dbReference type="PANTHER" id="PTHR33449">
    <property type="entry name" value="NUCLEOID-ASSOCIATED PROTEIN YBAB"/>
    <property type="match status" value="1"/>
</dbReference>
<dbReference type="PANTHER" id="PTHR33449:SF1">
    <property type="entry name" value="NUCLEOID-ASSOCIATED PROTEIN YBAB"/>
    <property type="match status" value="1"/>
</dbReference>
<dbReference type="Pfam" id="PF02575">
    <property type="entry name" value="YbaB_DNA_bd"/>
    <property type="match status" value="1"/>
</dbReference>
<dbReference type="PIRSF" id="PIRSF004555">
    <property type="entry name" value="UCP004555"/>
    <property type="match status" value="1"/>
</dbReference>
<dbReference type="SUPFAM" id="SSF82607">
    <property type="entry name" value="YbaB-like"/>
    <property type="match status" value="1"/>
</dbReference>
<protein>
    <recommendedName>
        <fullName evidence="1">Nucleoid-associated protein BP1550</fullName>
    </recommendedName>
</protein>
<proteinExistence type="inferred from homology"/>
<evidence type="ECO:0000255" key="1">
    <source>
        <dbReference type="HAMAP-Rule" id="MF_00274"/>
    </source>
</evidence>
<evidence type="ECO:0000256" key="2">
    <source>
        <dbReference type="SAM" id="MobiDB-lite"/>
    </source>
</evidence>
<accession>Q7VY13</accession>
<feature type="chain" id="PRO_0000170369" description="Nucleoid-associated protein BP1550">
    <location>
        <begin position="1"/>
        <end position="108"/>
    </location>
</feature>
<feature type="region of interest" description="Disordered" evidence="2">
    <location>
        <begin position="87"/>
        <end position="108"/>
    </location>
</feature>
<feature type="compositionally biased region" description="Pro residues" evidence="2">
    <location>
        <begin position="99"/>
        <end position="108"/>
    </location>
</feature>